<comment type="function">
    <text evidence="1 2 4 5">Decapping enzyme for NAD-capped RNAs: specifically hydrolyzes the nicotinamide adenine dinucleotide (NAD) cap from a subset of RNAs by removing the entire NAD moiety from the 5'-end of an NAD-capped RNA (By similarity). The NAD-cap is present at the 5'-end of some RNAs and snoRNAs. In contrast to the canonical 5'-end N7 methylguanosine (m7G) cap, the NAD cap promotes mRNA decay (By similarity). Also acts as a non-canonical decapping enzyme that removes the entire cap structure of m7G capped or incompletely capped RNAs (By similarity). Has decapping activity toward incomplete 5'-end m7G cap mRNAs such as unmethylated 5'-end-capped RNA (cap0), while it has no activity toward 2'-O-ribose methylated m7G cap (cap1) (By similarity). Also possesses RNA 5'-pyrophosphohydrolase activity by hydrolyzing the 5'-end triphosphate to release pyrophosphates (By similarity). Stimulates exoribonuclease activity of Rat1, allowing it to degrade RNAs with stable secondary structure more effectively (By similarity).</text>
</comment>
<comment type="catalytic activity">
    <reaction evidence="1">
        <text>a 5'-end NAD(+)-phospho-ribonucleoside in mRNA + H2O = a 5'-end phospho-ribonucleoside in mRNA + NAD(+) + H(+)</text>
        <dbReference type="Rhea" id="RHEA:60880"/>
        <dbReference type="Rhea" id="RHEA-COMP:15692"/>
        <dbReference type="Rhea" id="RHEA-COMP:15698"/>
        <dbReference type="ChEBI" id="CHEBI:15377"/>
        <dbReference type="ChEBI" id="CHEBI:15378"/>
        <dbReference type="ChEBI" id="CHEBI:57540"/>
        <dbReference type="ChEBI" id="CHEBI:138282"/>
        <dbReference type="ChEBI" id="CHEBI:144029"/>
    </reaction>
    <physiologicalReaction direction="left-to-right" evidence="1">
        <dbReference type="Rhea" id="RHEA:60881"/>
    </physiologicalReaction>
</comment>
<comment type="catalytic activity">
    <reaction evidence="3">
        <text>a 5'-end (N(7)-methyl 5'-triphosphoguanosine)-ribonucleoside-ribonucleotide in mRNA + H2O = a (N(7)-methyl 5'-triphosphoguanosine)-nucleoside + a 5'-end phospho-ribonucleoside in mRNA + H(+)</text>
        <dbReference type="Rhea" id="RHEA:66928"/>
        <dbReference type="Rhea" id="RHEA-COMP:15692"/>
        <dbReference type="Rhea" id="RHEA-COMP:17313"/>
        <dbReference type="ChEBI" id="CHEBI:15377"/>
        <dbReference type="ChEBI" id="CHEBI:15378"/>
        <dbReference type="ChEBI" id="CHEBI:138282"/>
        <dbReference type="ChEBI" id="CHEBI:172876"/>
        <dbReference type="ChEBI" id="CHEBI:172877"/>
    </reaction>
    <physiologicalReaction direction="left-to-right" evidence="3">
        <dbReference type="Rhea" id="RHEA:66929"/>
    </physiologicalReaction>
</comment>
<comment type="catalytic activity">
    <reaction evidence="1">
        <text>a 5'-end triphospho-ribonucleoside in mRNA + H2O = a 5'-end phospho-ribonucleoside in mRNA + diphosphate + H(+)</text>
        <dbReference type="Rhea" id="RHEA:78683"/>
        <dbReference type="Rhea" id="RHEA-COMP:15692"/>
        <dbReference type="Rhea" id="RHEA-COMP:17164"/>
        <dbReference type="ChEBI" id="CHEBI:15377"/>
        <dbReference type="ChEBI" id="CHEBI:15378"/>
        <dbReference type="ChEBI" id="CHEBI:33019"/>
        <dbReference type="ChEBI" id="CHEBI:138282"/>
        <dbReference type="ChEBI" id="CHEBI:167618"/>
    </reaction>
    <physiologicalReaction direction="left-to-right" evidence="1">
        <dbReference type="Rhea" id="RHEA:78684"/>
    </physiologicalReaction>
</comment>
<comment type="cofactor">
    <cofactor evidence="5">
        <name>a divalent metal cation</name>
        <dbReference type="ChEBI" id="CHEBI:60240"/>
    </cofactor>
    <text evidence="5">Divalent metal cation.</text>
</comment>
<comment type="subunit">
    <text evidence="1">Interacts with RAT1; the interaction is direct, stabilizes RAT1 protein structure and stimulates its exoribonuclease activity (By similarity). The interaction also stimulates RAI1 pyrophosphohydrolase activity, probably by recruiting it to mRNA substrates (By similarity).</text>
</comment>
<comment type="subcellular location">
    <subcellularLocation>
        <location evidence="3">Nucleus</location>
    </subcellularLocation>
</comment>
<comment type="similarity">
    <text evidence="6">Belongs to the DXO/Dom3Z family.</text>
</comment>
<protein>
    <recommendedName>
        <fullName evidence="6">Decapping nuclease RAI1</fullName>
        <ecNumber evidence="5">3.6.1.-</ecNumber>
    </recommendedName>
    <alternativeName>
        <fullName evidence="6">NAD-capped RNA hydrolase RAI1</fullName>
        <shortName evidence="6">DeNADding enzyme RAI1</shortName>
        <ecNumber evidence="1">3.6.1.-</ecNumber>
    </alternativeName>
</protein>
<feature type="chain" id="PRO_0000249838" description="Decapping nuclease RAI1">
    <location>
        <begin position="1"/>
        <end position="349"/>
    </location>
</feature>
<feature type="binding site" evidence="1">
    <location>
        <position position="157"/>
    </location>
    <ligand>
        <name>a divalent metal cation</name>
        <dbReference type="ChEBI" id="CHEBI:60240"/>
    </ligand>
</feature>
<feature type="binding site" evidence="2">
    <location>
        <position position="205"/>
    </location>
    <ligand>
        <name>substrate</name>
    </ligand>
</feature>
<feature type="binding site" evidence="1">
    <location>
        <position position="207"/>
    </location>
    <ligand>
        <name>a divalent metal cation</name>
        <dbReference type="ChEBI" id="CHEBI:60240"/>
    </ligand>
</feature>
<feature type="binding site" evidence="1">
    <location>
        <position position="222"/>
    </location>
    <ligand>
        <name>a divalent metal cation</name>
        <dbReference type="ChEBI" id="CHEBI:60240"/>
    </ligand>
</feature>
<feature type="binding site" evidence="1">
    <location>
        <position position="223"/>
    </location>
    <ligand>
        <name>a divalent metal cation</name>
        <dbReference type="ChEBI" id="CHEBI:60240"/>
    </ligand>
</feature>
<feature type="binding site" evidence="2">
    <location>
        <position position="224"/>
    </location>
    <ligand>
        <name>substrate</name>
    </ligand>
</feature>
<feature type="binding site" evidence="2">
    <location>
        <position position="248"/>
    </location>
    <ligand>
        <name>substrate</name>
    </ligand>
</feature>
<evidence type="ECO:0000250" key="1">
    <source>
        <dbReference type="UniProtKB" id="O13836"/>
    </source>
</evidence>
<evidence type="ECO:0000250" key="2">
    <source>
        <dbReference type="UniProtKB" id="O70348"/>
    </source>
</evidence>
<evidence type="ECO:0000250" key="3">
    <source>
        <dbReference type="UniProtKB" id="P53063"/>
    </source>
</evidence>
<evidence type="ECO:0000250" key="4">
    <source>
        <dbReference type="UniProtKB" id="Q06349"/>
    </source>
</evidence>
<evidence type="ECO:0000250" key="5">
    <source>
        <dbReference type="UniProtKB" id="Q5AAT0"/>
    </source>
</evidence>
<evidence type="ECO:0000305" key="6"/>
<sequence length="349" mass="40314">MSSFSTTERLAAKLKKPKEVYSYSITDGKVTMDQSQLKYYYLPEETILKAPIDLTKGIENWTQPNEHDTHLDTLLESLSKYERETGSKIDAEIITWRGILTKIMTHPYDQYNEPIVLNITYFDGHYFIEEDWQSKQQGKKAPDEQMKKHIYSGYKFESVALLNEPWFKSSREDIESRFDDIPNGDQFVSVVRTQIGDNKILIGGEVDCVFDPCAKGTSRYGELKTSREVHNAKDGEILERKMNRAWAQSFLLGVKHIIYGYRTGDHKLAAVDYFKTEDLPMYAGASSTWSGTDEINFLNAALTKLKDLPKEDNKLWRLVFDSANKKVDITELDGESFLLKEFVDWRKSM</sequence>
<name>DXO_YARLI</name>
<accession>Q6C4A3</accession>
<proteinExistence type="inferred from homology"/>
<dbReference type="EC" id="3.6.1.-" evidence="5 1"/>
<dbReference type="EMBL" id="CR382131">
    <property type="protein sequence ID" value="CAG80112.1"/>
    <property type="molecule type" value="Genomic_DNA"/>
</dbReference>
<dbReference type="RefSeq" id="XP_504509.1">
    <property type="nucleotide sequence ID" value="XM_504509.1"/>
</dbReference>
<dbReference type="SMR" id="Q6C4A3"/>
<dbReference type="FunCoup" id="Q6C4A3">
    <property type="interactions" value="658"/>
</dbReference>
<dbReference type="STRING" id="284591.Q6C4A3"/>
<dbReference type="EnsemblFungi" id="CAG80112">
    <property type="protein sequence ID" value="CAG80112"/>
    <property type="gene ID" value="YALI0_E28490g"/>
</dbReference>
<dbReference type="KEGG" id="yli:2911616"/>
<dbReference type="VEuPathDB" id="FungiDB:YALI0_E28490g"/>
<dbReference type="HOGENOM" id="CLU_024877_4_1_1"/>
<dbReference type="InParanoid" id="Q6C4A3"/>
<dbReference type="OMA" id="VVTWRGH"/>
<dbReference type="OrthoDB" id="5521at4891"/>
<dbReference type="Proteomes" id="UP000001300">
    <property type="component" value="Chromosome E"/>
</dbReference>
<dbReference type="GO" id="GO:0005829">
    <property type="term" value="C:cytosol"/>
    <property type="evidence" value="ECO:0000318"/>
    <property type="project" value="GO_Central"/>
</dbReference>
<dbReference type="GO" id="GO:0090730">
    <property type="term" value="C:Las1 complex"/>
    <property type="evidence" value="ECO:0007669"/>
    <property type="project" value="EnsemblFungi"/>
</dbReference>
<dbReference type="GO" id="GO:0005634">
    <property type="term" value="C:nucleus"/>
    <property type="evidence" value="ECO:0000318"/>
    <property type="project" value="GO_Central"/>
</dbReference>
<dbReference type="GO" id="GO:0110103">
    <property type="term" value="C:RNA polymerase II termination complex"/>
    <property type="evidence" value="ECO:0007669"/>
    <property type="project" value="EnsemblFungi"/>
</dbReference>
<dbReference type="GO" id="GO:0030234">
    <property type="term" value="F:enzyme regulator activity"/>
    <property type="evidence" value="ECO:0007669"/>
    <property type="project" value="EnsemblFungi"/>
</dbReference>
<dbReference type="GO" id="GO:0046872">
    <property type="term" value="F:metal ion binding"/>
    <property type="evidence" value="ECO:0007669"/>
    <property type="project" value="UniProtKB-KW"/>
</dbReference>
<dbReference type="GO" id="GO:0034353">
    <property type="term" value="F:mRNA 5'-diphosphatase activity"/>
    <property type="evidence" value="ECO:0000318"/>
    <property type="project" value="GO_Central"/>
</dbReference>
<dbReference type="GO" id="GO:0000166">
    <property type="term" value="F:nucleotide binding"/>
    <property type="evidence" value="ECO:0007669"/>
    <property type="project" value="UniProtKB-KW"/>
</dbReference>
<dbReference type="GO" id="GO:1990174">
    <property type="term" value="F:phosphodiesterase decapping endonuclease activity"/>
    <property type="evidence" value="ECO:0007669"/>
    <property type="project" value="EnsemblFungi"/>
</dbReference>
<dbReference type="GO" id="GO:0003723">
    <property type="term" value="F:RNA binding"/>
    <property type="evidence" value="ECO:0007669"/>
    <property type="project" value="UniProtKB-KW"/>
</dbReference>
<dbReference type="GO" id="GO:0110152">
    <property type="term" value="F:RNA NAD+-cap (NAD+-forming) hydrolase activity"/>
    <property type="evidence" value="ECO:0007669"/>
    <property type="project" value="RHEA"/>
</dbReference>
<dbReference type="GO" id="GO:0000448">
    <property type="term" value="P:cleavage in ITS2 between 5.8S rRNA and LSU-rRNA of tricistronic rRNA transcript (SSU-rRNA, 5.8S rRNA, LSU-rRNA)"/>
    <property type="evidence" value="ECO:0007669"/>
    <property type="project" value="EnsemblFungi"/>
</dbReference>
<dbReference type="GO" id="GO:0031087">
    <property type="term" value="P:deadenylation-independent decapping of nuclear-transcribed mRNA"/>
    <property type="evidence" value="ECO:0007669"/>
    <property type="project" value="EnsemblFungi"/>
</dbReference>
<dbReference type="GO" id="GO:0006397">
    <property type="term" value="P:mRNA processing"/>
    <property type="evidence" value="ECO:0007669"/>
    <property type="project" value="UniProtKB-KW"/>
</dbReference>
<dbReference type="GO" id="GO:0110155">
    <property type="term" value="P:NAD-cap decapping"/>
    <property type="evidence" value="ECO:0000318"/>
    <property type="project" value="GO_Central"/>
</dbReference>
<dbReference type="GO" id="GO:0071035">
    <property type="term" value="P:nuclear polyadenylation-dependent rRNA catabolic process"/>
    <property type="evidence" value="ECO:0007669"/>
    <property type="project" value="EnsemblFungi"/>
</dbReference>
<dbReference type="GO" id="GO:0000956">
    <property type="term" value="P:nuclear-transcribed mRNA catabolic process"/>
    <property type="evidence" value="ECO:0000318"/>
    <property type="project" value="GO_Central"/>
</dbReference>
<dbReference type="GO" id="GO:1904595">
    <property type="term" value="P:positive regulation of termination of RNA polymerase II transcription"/>
    <property type="evidence" value="ECO:0007669"/>
    <property type="project" value="EnsemblFungi"/>
</dbReference>
<dbReference type="GO" id="GO:0030846">
    <property type="term" value="P:termination of RNA polymerase II transcription, poly(A)-coupled"/>
    <property type="evidence" value="ECO:0007669"/>
    <property type="project" value="EnsemblFungi"/>
</dbReference>
<dbReference type="InterPro" id="IPR013961">
    <property type="entry name" value="RAI1"/>
</dbReference>
<dbReference type="InterPro" id="IPR039039">
    <property type="entry name" value="RAI1-like_fam"/>
</dbReference>
<dbReference type="PANTHER" id="PTHR12395:SF9">
    <property type="entry name" value="DECAPPING AND EXORIBONUCLEASE PROTEIN"/>
    <property type="match status" value="1"/>
</dbReference>
<dbReference type="PANTHER" id="PTHR12395">
    <property type="entry name" value="DOM-3 RELATED"/>
    <property type="match status" value="1"/>
</dbReference>
<dbReference type="Pfam" id="PF08652">
    <property type="entry name" value="RAI1"/>
    <property type="match status" value="1"/>
</dbReference>
<keyword id="KW-0378">Hydrolase</keyword>
<keyword id="KW-0479">Metal-binding</keyword>
<keyword id="KW-0507">mRNA processing</keyword>
<keyword id="KW-0540">Nuclease</keyword>
<keyword id="KW-0547">Nucleotide-binding</keyword>
<keyword id="KW-0539">Nucleus</keyword>
<keyword id="KW-1185">Reference proteome</keyword>
<keyword id="KW-0694">RNA-binding</keyword>
<gene>
    <name type="primary">RAI1</name>
    <name type="ordered locus">YALI0E28490g</name>
</gene>
<reference key="1">
    <citation type="journal article" date="2004" name="Nature">
        <title>Genome evolution in yeasts.</title>
        <authorList>
            <person name="Dujon B."/>
            <person name="Sherman D."/>
            <person name="Fischer G."/>
            <person name="Durrens P."/>
            <person name="Casaregola S."/>
            <person name="Lafontaine I."/>
            <person name="de Montigny J."/>
            <person name="Marck C."/>
            <person name="Neuveglise C."/>
            <person name="Talla E."/>
            <person name="Goffard N."/>
            <person name="Frangeul L."/>
            <person name="Aigle M."/>
            <person name="Anthouard V."/>
            <person name="Babour A."/>
            <person name="Barbe V."/>
            <person name="Barnay S."/>
            <person name="Blanchin S."/>
            <person name="Beckerich J.-M."/>
            <person name="Beyne E."/>
            <person name="Bleykasten C."/>
            <person name="Boisrame A."/>
            <person name="Boyer J."/>
            <person name="Cattolico L."/>
            <person name="Confanioleri F."/>
            <person name="de Daruvar A."/>
            <person name="Despons L."/>
            <person name="Fabre E."/>
            <person name="Fairhead C."/>
            <person name="Ferry-Dumazet H."/>
            <person name="Groppi A."/>
            <person name="Hantraye F."/>
            <person name="Hennequin C."/>
            <person name="Jauniaux N."/>
            <person name="Joyet P."/>
            <person name="Kachouri R."/>
            <person name="Kerrest A."/>
            <person name="Koszul R."/>
            <person name="Lemaire M."/>
            <person name="Lesur I."/>
            <person name="Ma L."/>
            <person name="Muller H."/>
            <person name="Nicaud J.-M."/>
            <person name="Nikolski M."/>
            <person name="Oztas S."/>
            <person name="Ozier-Kalogeropoulos O."/>
            <person name="Pellenz S."/>
            <person name="Potier S."/>
            <person name="Richard G.-F."/>
            <person name="Straub M.-L."/>
            <person name="Suleau A."/>
            <person name="Swennen D."/>
            <person name="Tekaia F."/>
            <person name="Wesolowski-Louvel M."/>
            <person name="Westhof E."/>
            <person name="Wirth B."/>
            <person name="Zeniou-Meyer M."/>
            <person name="Zivanovic Y."/>
            <person name="Bolotin-Fukuhara M."/>
            <person name="Thierry A."/>
            <person name="Bouchier C."/>
            <person name="Caudron B."/>
            <person name="Scarpelli C."/>
            <person name="Gaillardin C."/>
            <person name="Weissenbach J."/>
            <person name="Wincker P."/>
            <person name="Souciet J.-L."/>
        </authorList>
    </citation>
    <scope>NUCLEOTIDE SEQUENCE [LARGE SCALE GENOMIC DNA]</scope>
    <source>
        <strain>CLIB 122 / E 150</strain>
    </source>
</reference>
<organism>
    <name type="scientific">Yarrowia lipolytica (strain CLIB 122 / E 150)</name>
    <name type="common">Yeast</name>
    <name type="synonym">Candida lipolytica</name>
    <dbReference type="NCBI Taxonomy" id="284591"/>
    <lineage>
        <taxon>Eukaryota</taxon>
        <taxon>Fungi</taxon>
        <taxon>Dikarya</taxon>
        <taxon>Ascomycota</taxon>
        <taxon>Saccharomycotina</taxon>
        <taxon>Dipodascomycetes</taxon>
        <taxon>Dipodascales</taxon>
        <taxon>Dipodascales incertae sedis</taxon>
        <taxon>Yarrowia</taxon>
    </lineage>
</organism>